<proteinExistence type="evidence at protein level"/>
<feature type="signal peptide" evidence="2">
    <location>
        <begin position="1"/>
        <end position="15"/>
    </location>
</feature>
<feature type="propeptide" id="PRO_0000027652" description="Activation peptide" evidence="6">
    <location>
        <begin position="16"/>
        <end position="45"/>
    </location>
</feature>
<feature type="chain" id="PRO_0000027653" description="Chymotrypsin BII">
    <location>
        <begin position="46"/>
        <end position="271"/>
    </location>
</feature>
<feature type="domain" description="Peptidase S1" evidence="3">
    <location>
        <begin position="46"/>
        <end position="268"/>
    </location>
</feature>
<feature type="active site" description="Charge relay system" evidence="1">
    <location>
        <position position="86"/>
    </location>
</feature>
<feature type="active site" description="Charge relay system" evidence="1">
    <location>
        <position position="132"/>
    </location>
</feature>
<feature type="active site" description="Charge relay system" evidence="1">
    <location>
        <position position="223"/>
    </location>
</feature>
<feature type="disulfide bond" evidence="3">
    <location>
        <begin position="71"/>
        <end position="87"/>
    </location>
</feature>
<feature type="disulfide bond" evidence="3">
    <location>
        <begin position="196"/>
        <end position="209"/>
    </location>
</feature>
<feature type="disulfide bond" evidence="3">
    <location>
        <begin position="219"/>
        <end position="245"/>
    </location>
</feature>
<name>CTRB2_PENVA</name>
<accession>P36178</accession>
<dbReference type="EC" id="3.4.21.1"/>
<dbReference type="SMR" id="P36178"/>
<dbReference type="MEROPS" id="S01.122"/>
<dbReference type="OrthoDB" id="5565075at2759"/>
<dbReference type="GO" id="GO:0005576">
    <property type="term" value="C:extracellular region"/>
    <property type="evidence" value="ECO:0007669"/>
    <property type="project" value="UniProtKB-SubCell"/>
</dbReference>
<dbReference type="GO" id="GO:0004252">
    <property type="term" value="F:serine-type endopeptidase activity"/>
    <property type="evidence" value="ECO:0007669"/>
    <property type="project" value="UniProtKB-EC"/>
</dbReference>
<dbReference type="GO" id="GO:0030574">
    <property type="term" value="P:collagen catabolic process"/>
    <property type="evidence" value="ECO:0007669"/>
    <property type="project" value="UniProtKB-KW"/>
</dbReference>
<dbReference type="GO" id="GO:0006508">
    <property type="term" value="P:proteolysis"/>
    <property type="evidence" value="ECO:0007669"/>
    <property type="project" value="UniProtKB-KW"/>
</dbReference>
<dbReference type="CDD" id="cd00190">
    <property type="entry name" value="Tryp_SPc"/>
    <property type="match status" value="1"/>
</dbReference>
<dbReference type="FunFam" id="2.40.10.10:FF:000034">
    <property type="entry name" value="Eupolytin"/>
    <property type="match status" value="1"/>
</dbReference>
<dbReference type="Gene3D" id="2.40.10.10">
    <property type="entry name" value="Trypsin-like serine proteases"/>
    <property type="match status" value="2"/>
</dbReference>
<dbReference type="InterPro" id="IPR050430">
    <property type="entry name" value="Peptidase_S1"/>
</dbReference>
<dbReference type="InterPro" id="IPR009003">
    <property type="entry name" value="Peptidase_S1_PA"/>
</dbReference>
<dbReference type="InterPro" id="IPR043504">
    <property type="entry name" value="Peptidase_S1_PA_chymotrypsin"/>
</dbReference>
<dbReference type="InterPro" id="IPR001314">
    <property type="entry name" value="Peptidase_S1A"/>
</dbReference>
<dbReference type="InterPro" id="IPR001254">
    <property type="entry name" value="Trypsin_dom"/>
</dbReference>
<dbReference type="InterPro" id="IPR018114">
    <property type="entry name" value="TRYPSIN_HIS"/>
</dbReference>
<dbReference type="InterPro" id="IPR033116">
    <property type="entry name" value="TRYPSIN_SER"/>
</dbReference>
<dbReference type="PANTHER" id="PTHR24276:SF91">
    <property type="entry name" value="AT26814P-RELATED"/>
    <property type="match status" value="1"/>
</dbReference>
<dbReference type="PANTHER" id="PTHR24276">
    <property type="entry name" value="POLYSERASE-RELATED"/>
    <property type="match status" value="1"/>
</dbReference>
<dbReference type="Pfam" id="PF00089">
    <property type="entry name" value="Trypsin"/>
    <property type="match status" value="1"/>
</dbReference>
<dbReference type="PRINTS" id="PR00722">
    <property type="entry name" value="CHYMOTRYPSIN"/>
</dbReference>
<dbReference type="SMART" id="SM00020">
    <property type="entry name" value="Tryp_SPc"/>
    <property type="match status" value="1"/>
</dbReference>
<dbReference type="SUPFAM" id="SSF50494">
    <property type="entry name" value="Trypsin-like serine proteases"/>
    <property type="match status" value="1"/>
</dbReference>
<dbReference type="PROSITE" id="PS50240">
    <property type="entry name" value="TRYPSIN_DOM"/>
    <property type="match status" value="1"/>
</dbReference>
<dbReference type="PROSITE" id="PS00134">
    <property type="entry name" value="TRYPSIN_HIS"/>
    <property type="match status" value="1"/>
</dbReference>
<dbReference type="PROSITE" id="PS00135">
    <property type="entry name" value="TRYPSIN_SER"/>
    <property type="match status" value="1"/>
</dbReference>
<sequence length="271" mass="28723">MIGKLSLLLVCVAVASGNPAAGKPWHWKSPKPLVDPRIHVNATPRIVGGVEATPHSWPHQAALFIDDMYFCGGSLISSEWVLTAAHCMDGAGFVEVVLGAHNIRQNEASQVSITSTDFFTHENWNSWLLTNDIALIKLPSPVSLNSNIKTVKLPSSDVAVGTTVTPTGWGRPLDSAGGISDVLRQVDVPIMTNDDCDAVYGIVGNGVVCIDSEGGKGTCNGDSGGPLNLNGMTYGITSFGSSAGCEVGYPDAFTRVYYYLDWIEQKTGVTP</sequence>
<protein>
    <recommendedName>
        <fullName>Chymotrypsin BII</fullName>
        <ecNumber>3.4.21.1</ecNumber>
    </recommendedName>
</protein>
<comment type="function">
    <text>Serine protease with chymotryptic and collagenolytic activities.</text>
</comment>
<comment type="catalytic activity">
    <reaction evidence="4 5">
        <text>Preferential cleavage: Tyr-|-Xaa, Trp-|-Xaa, Phe-|-Xaa, Leu-|-Xaa.</text>
        <dbReference type="EC" id="3.4.21.1"/>
    </reaction>
</comment>
<comment type="subcellular location">
    <subcellularLocation>
        <location>Secreted</location>
        <location>Extracellular space</location>
    </subcellularLocation>
</comment>
<comment type="similarity">
    <text evidence="3">Belongs to the peptidase S1 family.</text>
</comment>
<reference key="1">
    <citation type="journal article" date="1992" name="FEBS Lett.">
        <title>Molecular cloning of a cDNA that encodes a serine protease with chymotryptic and collagenolytic activities in the hepatopancreas of the shrimp Penaeus vanameii (Crustacea, Decapoda).</title>
        <authorList>
            <person name="Sellos D."/>
            <person name="van Wormhoudt A."/>
        </authorList>
    </citation>
    <scope>NUCLEOTIDE SEQUENCE</scope>
    <source>
        <tissue>Hepatopancreas</tissue>
    </source>
</reference>
<reference key="2">
    <citation type="journal article" date="1992" name="Comp. Biochem. Physiol.">
        <title>Purification, biochemical characterization and N-terminal sequence of a serine-protease with chymotrypsic and collagenolytic activities in a tropical shrimp, Penaeus vannamei (Crustacea, Decapoda).</title>
        <authorList>
            <person name="van Wormhoudt A."/>
            <person name="le Chevalier P."/>
            <person name="Sellos D."/>
        </authorList>
    </citation>
    <scope>PROTEIN SEQUENCE OF 46-65</scope>
    <scope>CHARACTERIZATION</scope>
    <source>
        <tissue>Hepatopancreas</tissue>
    </source>
</reference>
<keyword id="KW-0177">Collagen degradation</keyword>
<keyword id="KW-0903">Direct protein sequencing</keyword>
<keyword id="KW-1015">Disulfide bond</keyword>
<keyword id="KW-0378">Hydrolase</keyword>
<keyword id="KW-0645">Protease</keyword>
<keyword id="KW-0964">Secreted</keyword>
<keyword id="KW-0720">Serine protease</keyword>
<keyword id="KW-0732">Signal</keyword>
<keyword id="KW-0865">Zymogen</keyword>
<organism>
    <name type="scientific">Penaeus vannamei</name>
    <name type="common">Whiteleg shrimp</name>
    <name type="synonym">Litopenaeus vannamei</name>
    <dbReference type="NCBI Taxonomy" id="6689"/>
    <lineage>
        <taxon>Eukaryota</taxon>
        <taxon>Metazoa</taxon>
        <taxon>Ecdysozoa</taxon>
        <taxon>Arthropoda</taxon>
        <taxon>Crustacea</taxon>
        <taxon>Multicrustacea</taxon>
        <taxon>Malacostraca</taxon>
        <taxon>Eumalacostraca</taxon>
        <taxon>Eucarida</taxon>
        <taxon>Decapoda</taxon>
        <taxon>Dendrobranchiata</taxon>
        <taxon>Penaeoidea</taxon>
        <taxon>Penaeidae</taxon>
        <taxon>Penaeus</taxon>
    </lineage>
</organism>
<evidence type="ECO:0000250" key="1"/>
<evidence type="ECO:0000255" key="2"/>
<evidence type="ECO:0000255" key="3">
    <source>
        <dbReference type="PROSITE-ProRule" id="PRU00274"/>
    </source>
</evidence>
<evidence type="ECO:0000255" key="4">
    <source>
        <dbReference type="PROSITE-ProRule" id="PRU10078"/>
    </source>
</evidence>
<evidence type="ECO:0000255" key="5">
    <source>
        <dbReference type="PROSITE-ProRule" id="PRU10079"/>
    </source>
</evidence>
<evidence type="ECO:0000269" key="6">
    <source>
    </source>
</evidence>